<gene>
    <name type="ORF">ORF1</name>
</gene>
<keyword id="KW-0067">ATP-binding</keyword>
<keyword id="KW-0191">Covalent protein-RNA linkage</keyword>
<keyword id="KW-0378">Hydrolase</keyword>
<keyword id="KW-0547">Nucleotide-binding</keyword>
<keyword id="KW-0548">Nucleotidyltransferase</keyword>
<keyword id="KW-0597">Phosphoprotein</keyword>
<keyword id="KW-0645">Protease</keyword>
<keyword id="KW-0696">RNA-directed RNA polymerase</keyword>
<keyword id="KW-0788">Thiol protease</keyword>
<keyword id="KW-0808">Transferase</keyword>
<keyword id="KW-0693">Viral RNA replication</keyword>
<reference key="1">
    <citation type="journal article" date="1995" name="J. Virol.">
        <title>Genetic relatedness of the caliciviruses: San Miguel sea lion and vesicular exanthema of swine viruses constitute a single genotype within the Caliciviridae.</title>
        <authorList>
            <person name="Neill J.D."/>
            <person name="Meyer R.F."/>
            <person name="Seal B.S."/>
        </authorList>
    </citation>
    <scope>NUCLEOTIDE SEQUENCE [GENOMIC RNA]</scope>
</reference>
<reference key="2">
    <citation type="journal article" date="1992" name="Virus Res.">
        <title>Nucleotide sequence of the capsid protein gene of two serotypes of San Miguel sea lion virus: identification of conserved and non-conserved amino acid sequences among calicivirus capsid proteins.</title>
        <authorList>
            <person name="Neill J.D."/>
        </authorList>
    </citation>
    <scope>NUCLEOTIDE SEQUENCE [GENOMIC RNA] OF 1176-1214</scope>
</reference>
<comment type="function">
    <text evidence="1">NTPase presumably plays a role in replication. Despite having similarities with helicases, does not seem to display any helicase activity (By similarity).</text>
</comment>
<comment type="function">
    <text evidence="1">Viral genome-linked protein is covalently linked to the 5'-end of the positive-strand, negative-strand genomic RNAs and subgenomic RNA. Acts as a genome-linked replication primer. May recruit ribosome to viral RNA thereby promoting viral proteins translation (By similarity).</text>
</comment>
<comment type="function">
    <text evidence="1">Protease-polymerase p76 processes the polyprotein: Pro-Pol is first released by autocleavage, then all other proteins are cleaved. Cleaves host translation initiation factor eIF4G1 and eIF4G2 thereby inducing a shutdown of host protein synthesis. This shutdown may not prevent viral mRNA from being translated since viral Vpg replaces the cap. May cleave host polyadenylate-binding protein thereby inhibiting cellular translation. It is also an RNA-directed RNA polymerase which replicates genomic and antigenomic viral RNA by recognizing specific signals. Also transcribes a subgenomic mRNA by initiating RNA synthesis internally on antigenomic RNA. This sgRNA codes for structural proteins. Catalyzes the covalent attachment VPg with viral RNAs (By similarity).</text>
</comment>
<comment type="catalytic activity">
    <reaction>
        <text>a ribonucleoside 5'-triphosphate + H2O = a ribonucleoside 5'-diphosphate + phosphate + H(+)</text>
        <dbReference type="Rhea" id="RHEA:23680"/>
        <dbReference type="ChEBI" id="CHEBI:15377"/>
        <dbReference type="ChEBI" id="CHEBI:15378"/>
        <dbReference type="ChEBI" id="CHEBI:43474"/>
        <dbReference type="ChEBI" id="CHEBI:57930"/>
        <dbReference type="ChEBI" id="CHEBI:61557"/>
        <dbReference type="EC" id="3.6.1.15"/>
    </reaction>
</comment>
<comment type="catalytic activity">
    <reaction evidence="2">
        <text>RNA(n) + a ribonucleoside 5'-triphosphate = RNA(n+1) + diphosphate</text>
        <dbReference type="Rhea" id="RHEA:21248"/>
        <dbReference type="Rhea" id="RHEA-COMP:14527"/>
        <dbReference type="Rhea" id="RHEA-COMP:17342"/>
        <dbReference type="ChEBI" id="CHEBI:33019"/>
        <dbReference type="ChEBI" id="CHEBI:61557"/>
        <dbReference type="ChEBI" id="CHEBI:140395"/>
        <dbReference type="EC" id="2.7.7.48"/>
    </reaction>
</comment>
<comment type="catalytic activity">
    <reaction evidence="4">
        <text>Endopeptidase with a preference for cleavage when the P1 position is occupied by Glu-|-Xaa and the P1' position is occupied by Gly-|-Yaa.</text>
        <dbReference type="EC" id="3.4.22.66"/>
    </reaction>
</comment>
<comment type="domain">
    <text evidence="1">Protease-polymerase is composed of two domains displaying two different catalytic activity. These activities may act independently (By similarity).</text>
</comment>
<comment type="PTM">
    <text evidence="1">Specific enzymatic cleavages in vivo yield mature proteins. Pro-Pol is first autocatalytically cleaved, then processes the whole polyprotein (By similarity).</text>
</comment>
<comment type="PTM">
    <text evidence="1">VPg is uridylylated by the polymerase and is covalently attached to the 5'-end of the polyadenylated genomic and subgenomic RNAs. This uridylylated form acts as a nucleotide-peptide primer for the polymerase (By similarity).</text>
</comment>
<feature type="chain" id="PRO_0000342017" description="Genome polyprotein">
    <location>
        <begin position="1" status="less than"/>
        <end position="1214"/>
    </location>
</feature>
<feature type="chain" id="PRO_0000342018" description="NTPase" evidence="1">
    <location>
        <begin position="1" status="less than"/>
        <end position="126"/>
    </location>
</feature>
<feature type="chain" id="PRO_0000342019" description="Protein p30" evidence="1">
    <location>
        <begin position="127"/>
        <end position="405"/>
    </location>
</feature>
<feature type="chain" id="PRO_0000342020" description="Viral genome-linked protein" evidence="1">
    <location>
        <begin position="406"/>
        <end position="518"/>
    </location>
</feature>
<feature type="chain" id="PRO_0000036934" description="Protease-polymerase p76" evidence="1">
    <location>
        <begin position="519"/>
        <end position="1214"/>
    </location>
</feature>
<feature type="domain" description="SF3 helicase" evidence="3">
    <location>
        <begin position="1" status="less than"/>
        <end position="55"/>
    </location>
</feature>
<feature type="domain" description="Peptidase C24" evidence="4">
    <location>
        <begin position="523"/>
        <end position="676"/>
    </location>
</feature>
<feature type="domain" description="RdRp catalytic" evidence="2">
    <location>
        <begin position="926"/>
        <end position="1051"/>
    </location>
</feature>
<feature type="active site" description="For 3CLpro activity" evidence="4">
    <location>
        <position position="557"/>
    </location>
</feature>
<feature type="active site" description="For 3CLpro activity" evidence="4">
    <location>
        <position position="578"/>
    </location>
</feature>
<feature type="active site" description="For 3CLpro activity" evidence="4">
    <location>
        <position position="640"/>
    </location>
</feature>
<feature type="site" description="Cleavage; by Pro-Pol" evidence="1">
    <location>
        <begin position="126"/>
        <end position="127"/>
    </location>
</feature>
<feature type="site" description="Cleavage; by Pro-Pol" evidence="1">
    <location>
        <begin position="405"/>
        <end position="406"/>
    </location>
</feature>
<feature type="site" description="Cleavage; by Pro-Pol" evidence="1">
    <location>
        <begin position="518"/>
        <end position="519"/>
    </location>
</feature>
<feature type="modified residue" description="O-(5'-phospho-RNA)-tyrosine" evidence="1">
    <location>
        <position position="428"/>
    </location>
</feature>
<feature type="non-terminal residue">
    <location>
        <position position="1"/>
    </location>
</feature>
<organism>
    <name type="scientific">San Miguel sea lion virus serotype 4</name>
    <name type="common">SMSV-4</name>
    <name type="synonym">SMSV serotype 4</name>
    <dbReference type="NCBI Taxonomy" id="36407"/>
    <lineage>
        <taxon>Viruses</taxon>
        <taxon>Riboviria</taxon>
        <taxon>Orthornavirae</taxon>
        <taxon>Pisuviricota</taxon>
        <taxon>Pisoniviricetes</taxon>
        <taxon>Picornavirales</taxon>
        <taxon>Caliciviridae</taxon>
        <taxon>Vesivirus</taxon>
        <taxon>Vesicular exanthema of swine virus</taxon>
    </lineage>
</organism>
<protein>
    <recommendedName>
        <fullName>Genome polyprotein</fullName>
    </recommendedName>
    <component>
        <recommendedName>
            <fullName>NTPase</fullName>
            <ecNumber>3.6.1.15</ecNumber>
        </recommendedName>
        <alternativeName>
            <fullName>p39</fullName>
        </alternativeName>
    </component>
    <component>
        <recommendedName>
            <fullName>Protein p30</fullName>
        </recommendedName>
    </component>
    <component>
        <recommendedName>
            <fullName>Viral genome-linked protein</fullName>
        </recommendedName>
        <alternativeName>
            <fullName>VPg</fullName>
        </alternativeName>
        <alternativeName>
            <fullName>p13</fullName>
        </alternativeName>
    </component>
    <component>
        <recommendedName>
            <fullName>Protease-polymerase p76</fullName>
            <shortName>Pro-Pol</shortName>
            <ecNumber>2.7.7.48</ecNumber>
            <ecNumber>3.4.22.66</ecNumber>
        </recommendedName>
    </component>
</protein>
<evidence type="ECO:0000250" key="1"/>
<evidence type="ECO:0000255" key="2">
    <source>
        <dbReference type="PROSITE-ProRule" id="PRU00539"/>
    </source>
</evidence>
<evidence type="ECO:0000255" key="3">
    <source>
        <dbReference type="PROSITE-ProRule" id="PRU00551"/>
    </source>
</evidence>
<evidence type="ECO:0000255" key="4">
    <source>
        <dbReference type="PROSITE-ProRule" id="PRU01242"/>
    </source>
</evidence>
<organismHost>
    <name type="scientific">Otariidae</name>
    <name type="common">fur seals &amp; sea lions</name>
    <dbReference type="NCBI Taxonomy" id="9702"/>
</organismHost>
<name>POLG_SMSV4</name>
<proteinExistence type="inferred from homology"/>
<accession>P36287</accession>
<accession>Q88193</accession>
<dbReference type="EC" id="3.6.1.15"/>
<dbReference type="EC" id="2.7.7.48"/>
<dbReference type="EC" id="3.4.22.66"/>
<dbReference type="EMBL" id="M87482">
    <property type="protein sequence ID" value="AAA16219.1"/>
    <property type="molecule type" value="Genomic_RNA"/>
</dbReference>
<dbReference type="EMBL" id="U15302">
    <property type="protein sequence ID" value="AAA96500.1"/>
    <property type="molecule type" value="Genomic_RNA"/>
</dbReference>
<dbReference type="SMR" id="P36287"/>
<dbReference type="GO" id="GO:0005524">
    <property type="term" value="F:ATP binding"/>
    <property type="evidence" value="ECO:0007669"/>
    <property type="project" value="UniProtKB-KW"/>
</dbReference>
<dbReference type="GO" id="GO:0004197">
    <property type="term" value="F:cysteine-type endopeptidase activity"/>
    <property type="evidence" value="ECO:0007669"/>
    <property type="project" value="InterPro"/>
</dbReference>
<dbReference type="GO" id="GO:0004386">
    <property type="term" value="F:helicase activity"/>
    <property type="evidence" value="ECO:0007669"/>
    <property type="project" value="InterPro"/>
</dbReference>
<dbReference type="GO" id="GO:0017111">
    <property type="term" value="F:ribonucleoside triphosphate phosphatase activity"/>
    <property type="evidence" value="ECO:0007669"/>
    <property type="project" value="UniProtKB-EC"/>
</dbReference>
<dbReference type="GO" id="GO:0003723">
    <property type="term" value="F:RNA binding"/>
    <property type="evidence" value="ECO:0007669"/>
    <property type="project" value="InterPro"/>
</dbReference>
<dbReference type="GO" id="GO:0003968">
    <property type="term" value="F:RNA-directed RNA polymerase activity"/>
    <property type="evidence" value="ECO:0007669"/>
    <property type="project" value="UniProtKB-KW"/>
</dbReference>
<dbReference type="GO" id="GO:0006351">
    <property type="term" value="P:DNA-templated transcription"/>
    <property type="evidence" value="ECO:0007669"/>
    <property type="project" value="InterPro"/>
</dbReference>
<dbReference type="GO" id="GO:0006508">
    <property type="term" value="P:proteolysis"/>
    <property type="evidence" value="ECO:0007669"/>
    <property type="project" value="UniProtKB-KW"/>
</dbReference>
<dbReference type="GO" id="GO:0039694">
    <property type="term" value="P:viral RNA genome replication"/>
    <property type="evidence" value="ECO:0007669"/>
    <property type="project" value="InterPro"/>
</dbReference>
<dbReference type="CDD" id="cd23192">
    <property type="entry name" value="Caliciviridae_RdRp"/>
    <property type="match status" value="1"/>
</dbReference>
<dbReference type="Gene3D" id="1.10.260.110">
    <property type="match status" value="1"/>
</dbReference>
<dbReference type="Gene3D" id="1.20.960.20">
    <property type="match status" value="1"/>
</dbReference>
<dbReference type="Gene3D" id="3.30.70.270">
    <property type="match status" value="2"/>
</dbReference>
<dbReference type="Gene3D" id="6.10.250.3230">
    <property type="match status" value="1"/>
</dbReference>
<dbReference type="InterPro" id="IPR043502">
    <property type="entry name" value="DNA/RNA_pol_sf"/>
</dbReference>
<dbReference type="InterPro" id="IPR004004">
    <property type="entry name" value="Helic/Pol/Pept_Calicivir-typ"/>
</dbReference>
<dbReference type="InterPro" id="IPR014759">
    <property type="entry name" value="Helicase_SF3_ssRNA_vir"/>
</dbReference>
<dbReference type="InterPro" id="IPR000317">
    <property type="entry name" value="Peptidase_C24"/>
</dbReference>
<dbReference type="InterPro" id="IPR009003">
    <property type="entry name" value="Peptidase_S1_PA"/>
</dbReference>
<dbReference type="InterPro" id="IPR043128">
    <property type="entry name" value="Rev_trsase/Diguanyl_cyclase"/>
</dbReference>
<dbReference type="InterPro" id="IPR001205">
    <property type="entry name" value="RNA-dir_pol_C"/>
</dbReference>
<dbReference type="InterPro" id="IPR007094">
    <property type="entry name" value="RNA-dir_pol_PSvirus"/>
</dbReference>
<dbReference type="InterPro" id="IPR049434">
    <property type="entry name" value="VPg"/>
</dbReference>
<dbReference type="Pfam" id="PF03510">
    <property type="entry name" value="Peptidase_C24"/>
    <property type="match status" value="1"/>
</dbReference>
<dbReference type="Pfam" id="PF00680">
    <property type="entry name" value="RdRP_1"/>
    <property type="match status" value="1"/>
</dbReference>
<dbReference type="Pfam" id="PF20915">
    <property type="entry name" value="VPg"/>
    <property type="match status" value="1"/>
</dbReference>
<dbReference type="PRINTS" id="PR00916">
    <property type="entry name" value="2CENDOPTASE"/>
</dbReference>
<dbReference type="PRINTS" id="PR00918">
    <property type="entry name" value="CALICVIRUSNS"/>
</dbReference>
<dbReference type="SUPFAM" id="SSF56672">
    <property type="entry name" value="DNA/RNA polymerases"/>
    <property type="match status" value="1"/>
</dbReference>
<dbReference type="SUPFAM" id="SSF50494">
    <property type="entry name" value="Trypsin-like serine proteases"/>
    <property type="match status" value="1"/>
</dbReference>
<dbReference type="PROSITE" id="PS51894">
    <property type="entry name" value="CV_3CL_PRO"/>
    <property type="match status" value="1"/>
</dbReference>
<dbReference type="PROSITE" id="PS50507">
    <property type="entry name" value="RDRP_SSRNA_POS"/>
    <property type="match status" value="1"/>
</dbReference>
<dbReference type="PROSITE" id="PS51218">
    <property type="entry name" value="SF3_HELICASE_2"/>
    <property type="match status" value="1"/>
</dbReference>
<sequence length="1214" mass="135088">NKGKTFTSKYVIMTSNTETPVKPTSRRAGAFYRRVMIVDVTNNAVEKWKSDNPGKAVPKWCFNKDFSHLSLSLRGTEAYCKEYVLDPTGRNHQSRRAPPPQQVTLEQLAQKMVVQHTTNTSEFVTQAGDVPVFGFVCQNNEIDTVYNLLAAVKARYGANFNLYKGMVRTAHENSGCGAHVHVISREDNFRGKVFTVSRSRLESVPHLEGDSFRRSLGVVMSDKDVTTMFYYIKGKVINDQVNLTELPANQHVVTVHTVYDMAWALRRHLKWSGQWQLIKAAFEIMCYPDAAACALRNWMDSTDFSEEHVVTQFIAPGGTIILESCHGARMWATGKRLIRAGGITEAGGPQGGVRFAGLGARNVPWSEILREFMTLISHIWSQIKGATVVLTALTFYLKRFRPRIEAKGKNKNKGARKNTGVALTDDEYDEWRQYRTEKNLDLTVEDFLQLRHRAAMGADDSDAVKFRCWYSERQRNYHDLEDVTIIGRGGVKRELIRKGPLRPRGNDYYDEPDDWYSEGVIDGVAHKNAIVSVDDVDGMHKGYAIHIGHGVYISLKHVVSGNARILSEEPKNLTFTGELATFRLNNILPTAVPVGTSKPIKDPWGNPVSTDWQFKNYNTTSGNIYGACGSSCSLTRQGDCGLPYVDDHGVVVGLHAGSGGDKCPSRKLIVPYAKVDMRVRDTCTKQCYKDNSPTISYKGLLVKETGEPRTIMKGTRLHVSPAHTDDYEECTHQPASLGAGDPRCPISLTGIMVNNLQPYTEASPGPDTATLNRVSKMLTSHMEGYVQKSQTEEGYGSAFYMLNHDTSCGPYIGGRKKDHVKDGVLDKNLLDLLSSKWNRAKLGLALPHEYALGLKDELRPKDKVAVGKRRLIWGCDVGVSTVCRAAFKRVSESIMANHALGFIQVGINMDGPAVEDLFKRLERPKHDRYCVDYSKWDSTQPPKVTSQSIDILRHFTDKSPIVDSACATLKSNPIGIFNGVAFKVAGGLPSGMPLTSIINSLNHCLMVGSAVVKALEDSGVQVSWNIFDSMDLFTYGDDGVYIVPPLISSVMPNVFANLKQFGLKPTRTDKSDAEITPIPADEPVEFLKRTIVRTENGIRALLDRSSIIRQFYYIKAENTENWTIPPKKIDTPSRGQQLYNACLYASQHGEEFYTNKIIPLVQRAIEFEGLHIEVPEFHHAVAAYNGYFNGTEGQPNQIAFASGGLGLSSEVFEN</sequence>